<organism>
    <name type="scientific">Shewanella sp. (strain W3-18-1)</name>
    <dbReference type="NCBI Taxonomy" id="351745"/>
    <lineage>
        <taxon>Bacteria</taxon>
        <taxon>Pseudomonadati</taxon>
        <taxon>Pseudomonadota</taxon>
        <taxon>Gammaproteobacteria</taxon>
        <taxon>Alteromonadales</taxon>
        <taxon>Shewanellaceae</taxon>
        <taxon>Shewanella</taxon>
    </lineage>
</organism>
<dbReference type="EC" id="2.1.1.186" evidence="1"/>
<dbReference type="EMBL" id="CP000503">
    <property type="protein sequence ID" value="ABM25638.1"/>
    <property type="molecule type" value="Genomic_DNA"/>
</dbReference>
<dbReference type="RefSeq" id="WP_011790093.1">
    <property type="nucleotide sequence ID" value="NC_008750.1"/>
</dbReference>
<dbReference type="SMR" id="A1RLU3"/>
<dbReference type="KEGG" id="shw:Sputw3181_2821"/>
<dbReference type="HOGENOM" id="CLU_043780_0_0_6"/>
<dbReference type="Proteomes" id="UP000002597">
    <property type="component" value="Chromosome"/>
</dbReference>
<dbReference type="GO" id="GO:0005737">
    <property type="term" value="C:cytoplasm"/>
    <property type="evidence" value="ECO:0007669"/>
    <property type="project" value="UniProtKB-SubCell"/>
</dbReference>
<dbReference type="GO" id="GO:0008757">
    <property type="term" value="F:S-adenosylmethionine-dependent methyltransferase activity"/>
    <property type="evidence" value="ECO:0007669"/>
    <property type="project" value="UniProtKB-UniRule"/>
</dbReference>
<dbReference type="GO" id="GO:0032259">
    <property type="term" value="P:methylation"/>
    <property type="evidence" value="ECO:0007669"/>
    <property type="project" value="UniProtKB-KW"/>
</dbReference>
<dbReference type="GO" id="GO:0006364">
    <property type="term" value="P:rRNA processing"/>
    <property type="evidence" value="ECO:0007669"/>
    <property type="project" value="UniProtKB-UniRule"/>
</dbReference>
<dbReference type="Gene3D" id="3.30.2300.20">
    <property type="match status" value="1"/>
</dbReference>
<dbReference type="Gene3D" id="3.30.70.2810">
    <property type="match status" value="1"/>
</dbReference>
<dbReference type="Gene3D" id="3.40.50.150">
    <property type="entry name" value="Vaccinia Virus protein VP39"/>
    <property type="match status" value="1"/>
</dbReference>
<dbReference type="HAMAP" id="MF_01551">
    <property type="entry name" value="23SrRNA_methyltr_M"/>
    <property type="match status" value="1"/>
</dbReference>
<dbReference type="InterPro" id="IPR040739">
    <property type="entry name" value="RlmM_FDX"/>
</dbReference>
<dbReference type="InterPro" id="IPR048646">
    <property type="entry name" value="RlmM_THUMP-like"/>
</dbReference>
<dbReference type="InterPro" id="IPR002877">
    <property type="entry name" value="RNA_MeTrfase_FtsJ_dom"/>
</dbReference>
<dbReference type="InterPro" id="IPR011224">
    <property type="entry name" value="rRNA_MeTrfase_M"/>
</dbReference>
<dbReference type="InterPro" id="IPR029063">
    <property type="entry name" value="SAM-dependent_MTases_sf"/>
</dbReference>
<dbReference type="NCBIfam" id="NF008734">
    <property type="entry name" value="PRK11760.1"/>
    <property type="match status" value="1"/>
</dbReference>
<dbReference type="PANTHER" id="PTHR37524">
    <property type="entry name" value="RIBOSOMAL RNA LARGE SUBUNIT METHYLTRANSFERASE M"/>
    <property type="match status" value="1"/>
</dbReference>
<dbReference type="PANTHER" id="PTHR37524:SF2">
    <property type="entry name" value="RIBOSOMAL RNA METHYLTRANSFERASE FTSJ DOMAIN-CONTAINING PROTEIN"/>
    <property type="match status" value="1"/>
</dbReference>
<dbReference type="Pfam" id="PF01728">
    <property type="entry name" value="FtsJ"/>
    <property type="match status" value="1"/>
</dbReference>
<dbReference type="Pfam" id="PF18125">
    <property type="entry name" value="RlmM_FDX"/>
    <property type="match status" value="1"/>
</dbReference>
<dbReference type="Pfam" id="PF21239">
    <property type="entry name" value="RLMM_N"/>
    <property type="match status" value="1"/>
</dbReference>
<dbReference type="PIRSF" id="PIRSF028774">
    <property type="entry name" value="UCP028774"/>
    <property type="match status" value="1"/>
</dbReference>
<dbReference type="SUPFAM" id="SSF53335">
    <property type="entry name" value="S-adenosyl-L-methionine-dependent methyltransferases"/>
    <property type="match status" value="1"/>
</dbReference>
<name>RLMM_SHESW</name>
<accession>A1RLU3</accession>
<proteinExistence type="inferred from homology"/>
<gene>
    <name evidence="1" type="primary">rlmM</name>
    <name type="ordered locus">Sputw3181_2821</name>
</gene>
<sequence length="361" mass="40952">MKNLFLFCRAGFEKECAAEIQQRAGELNVGGFVKANNNDAYVVYQCFEDDAADTLVKQLPLDSLIFARQMFAASDLLVDLPENDRISPIVAALSDVSKAGEVRVETPDTNEAKELSAFCRKFTVPLRQHLKKSGSLLAQENPKRPIIHVCFIGPGRAYVGYSYSNNSSPHFMGIPRLKMAADAPSRSSLKLDEAFGQFVPKEEQEERIRSGMNAVDLGACPGGWTYQLVRRGMFVSAVDNGPMDEKLMETGQVKHYREDGFRFEPQRKNIYWLVCDMVEKPARVAELIEAWAINGWFKEAIFNLKLPMKSRYKEVTAILETMQTILKENGVTDFKVQCKHLYHDRDEVTVHLWLRPNTAWN</sequence>
<protein>
    <recommendedName>
        <fullName evidence="1">Ribosomal RNA large subunit methyltransferase M</fullName>
        <ecNumber evidence="1">2.1.1.186</ecNumber>
    </recommendedName>
    <alternativeName>
        <fullName evidence="1">23S rRNA (cytidine2498-2'-O)-methyltransferase</fullName>
    </alternativeName>
    <alternativeName>
        <fullName evidence="1">23S rRNA 2'-O-ribose methyltransferase RlmM</fullName>
    </alternativeName>
</protein>
<comment type="function">
    <text evidence="1">Catalyzes the 2'-O-methylation at nucleotide C2498 in 23S rRNA.</text>
</comment>
<comment type="catalytic activity">
    <reaction evidence="1">
        <text>cytidine(2498) in 23S rRNA + S-adenosyl-L-methionine = 2'-O-methylcytidine(2498) in 23S rRNA + S-adenosyl-L-homocysteine + H(+)</text>
        <dbReference type="Rhea" id="RHEA:42788"/>
        <dbReference type="Rhea" id="RHEA-COMP:10244"/>
        <dbReference type="Rhea" id="RHEA-COMP:10245"/>
        <dbReference type="ChEBI" id="CHEBI:15378"/>
        <dbReference type="ChEBI" id="CHEBI:57856"/>
        <dbReference type="ChEBI" id="CHEBI:59789"/>
        <dbReference type="ChEBI" id="CHEBI:74495"/>
        <dbReference type="ChEBI" id="CHEBI:82748"/>
        <dbReference type="EC" id="2.1.1.186"/>
    </reaction>
</comment>
<comment type="subunit">
    <text evidence="1">Monomer.</text>
</comment>
<comment type="subcellular location">
    <subcellularLocation>
        <location evidence="1">Cytoplasm</location>
    </subcellularLocation>
</comment>
<comment type="similarity">
    <text evidence="1">Belongs to the class I-like SAM-binding methyltransferase superfamily. RNA methyltransferase RlmE family. RlmM subfamily.</text>
</comment>
<reference key="1">
    <citation type="submission" date="2006-12" db="EMBL/GenBank/DDBJ databases">
        <title>Complete sequence of Shewanella sp. W3-18-1.</title>
        <authorList>
            <consortium name="US DOE Joint Genome Institute"/>
            <person name="Copeland A."/>
            <person name="Lucas S."/>
            <person name="Lapidus A."/>
            <person name="Barry K."/>
            <person name="Detter J.C."/>
            <person name="Glavina del Rio T."/>
            <person name="Hammon N."/>
            <person name="Israni S."/>
            <person name="Dalin E."/>
            <person name="Tice H."/>
            <person name="Pitluck S."/>
            <person name="Chain P."/>
            <person name="Malfatti S."/>
            <person name="Shin M."/>
            <person name="Vergez L."/>
            <person name="Schmutz J."/>
            <person name="Larimer F."/>
            <person name="Land M."/>
            <person name="Hauser L."/>
            <person name="Kyrpides N."/>
            <person name="Lykidis A."/>
            <person name="Tiedje J."/>
            <person name="Richardson P."/>
        </authorList>
    </citation>
    <scope>NUCLEOTIDE SEQUENCE [LARGE SCALE GENOMIC DNA]</scope>
    <source>
        <strain>W3-18-1</strain>
    </source>
</reference>
<feature type="chain" id="PRO_0000314543" description="Ribosomal RNA large subunit methyltransferase M">
    <location>
        <begin position="1"/>
        <end position="361"/>
    </location>
</feature>
<feature type="active site" description="Proton acceptor" evidence="1">
    <location>
        <position position="305"/>
    </location>
</feature>
<feature type="binding site" evidence="1">
    <location>
        <position position="187"/>
    </location>
    <ligand>
        <name>S-adenosyl-L-methionine</name>
        <dbReference type="ChEBI" id="CHEBI:59789"/>
    </ligand>
</feature>
<feature type="binding site" evidence="1">
    <location>
        <begin position="220"/>
        <end position="223"/>
    </location>
    <ligand>
        <name>S-adenosyl-L-methionine</name>
        <dbReference type="ChEBI" id="CHEBI:59789"/>
    </ligand>
</feature>
<feature type="binding site" evidence="1">
    <location>
        <position position="239"/>
    </location>
    <ligand>
        <name>S-adenosyl-L-methionine</name>
        <dbReference type="ChEBI" id="CHEBI:59789"/>
    </ligand>
</feature>
<feature type="binding site" evidence="1">
    <location>
        <position position="259"/>
    </location>
    <ligand>
        <name>S-adenosyl-L-methionine</name>
        <dbReference type="ChEBI" id="CHEBI:59789"/>
    </ligand>
</feature>
<feature type="binding site" evidence="1">
    <location>
        <position position="276"/>
    </location>
    <ligand>
        <name>S-adenosyl-L-methionine</name>
        <dbReference type="ChEBI" id="CHEBI:59789"/>
    </ligand>
</feature>
<keyword id="KW-0963">Cytoplasm</keyword>
<keyword id="KW-0489">Methyltransferase</keyword>
<keyword id="KW-0698">rRNA processing</keyword>
<keyword id="KW-0949">S-adenosyl-L-methionine</keyword>
<keyword id="KW-0808">Transferase</keyword>
<evidence type="ECO:0000255" key="1">
    <source>
        <dbReference type="HAMAP-Rule" id="MF_01551"/>
    </source>
</evidence>